<name>DCD_ACTPJ</name>
<evidence type="ECO:0000255" key="1">
    <source>
        <dbReference type="HAMAP-Rule" id="MF_00146"/>
    </source>
</evidence>
<evidence type="ECO:0000256" key="2">
    <source>
        <dbReference type="SAM" id="MobiDB-lite"/>
    </source>
</evidence>
<organism>
    <name type="scientific">Actinobacillus pleuropneumoniae serotype 3 (strain JL03)</name>
    <dbReference type="NCBI Taxonomy" id="434271"/>
    <lineage>
        <taxon>Bacteria</taxon>
        <taxon>Pseudomonadati</taxon>
        <taxon>Pseudomonadota</taxon>
        <taxon>Gammaproteobacteria</taxon>
        <taxon>Pasteurellales</taxon>
        <taxon>Pasteurellaceae</taxon>
        <taxon>Actinobacillus</taxon>
    </lineage>
</organism>
<gene>
    <name evidence="1" type="primary">dcd</name>
    <name type="ordered locus">APJL_0843</name>
</gene>
<proteinExistence type="inferred from homology"/>
<sequence>MRLCDTDIERYLDEGIIEIIPRPSNEKITGATVDVRLGNSFRVFREHATPYIDLSGPREEVTAQLHKVMSEEIIIADGEAFFLHPGELALATTLESVTLPDNVVGWLDGRSSLARLGLMVHVTAHRIDPGWQGKIVLEFFNAGKLPLALRPNMAIGALSFEILSGHAAKPYNARKDAKYKNQQSAVSSRINQDD</sequence>
<feature type="chain" id="PRO_1000096404" description="dCTP deaminase">
    <location>
        <begin position="1"/>
        <end position="194"/>
    </location>
</feature>
<feature type="region of interest" description="Disordered" evidence="2">
    <location>
        <begin position="175"/>
        <end position="194"/>
    </location>
</feature>
<feature type="compositionally biased region" description="Polar residues" evidence="2">
    <location>
        <begin position="180"/>
        <end position="194"/>
    </location>
</feature>
<feature type="active site" description="Proton donor/acceptor" evidence="1">
    <location>
        <position position="138"/>
    </location>
</feature>
<feature type="binding site" evidence="1">
    <location>
        <begin position="110"/>
        <end position="115"/>
    </location>
    <ligand>
        <name>dCTP</name>
        <dbReference type="ChEBI" id="CHEBI:61481"/>
    </ligand>
</feature>
<feature type="binding site" evidence="1">
    <location>
        <position position="128"/>
    </location>
    <ligand>
        <name>dCTP</name>
        <dbReference type="ChEBI" id="CHEBI:61481"/>
    </ligand>
</feature>
<feature type="binding site" evidence="1">
    <location>
        <begin position="136"/>
        <end position="138"/>
    </location>
    <ligand>
        <name>dCTP</name>
        <dbReference type="ChEBI" id="CHEBI:61481"/>
    </ligand>
</feature>
<feature type="binding site" evidence="1">
    <location>
        <position position="171"/>
    </location>
    <ligand>
        <name>dCTP</name>
        <dbReference type="ChEBI" id="CHEBI:61481"/>
    </ligand>
</feature>
<feature type="binding site" evidence="1">
    <location>
        <position position="178"/>
    </location>
    <ligand>
        <name>dCTP</name>
        <dbReference type="ChEBI" id="CHEBI:61481"/>
    </ligand>
</feature>
<feature type="binding site" evidence="1">
    <location>
        <position position="182"/>
    </location>
    <ligand>
        <name>dCTP</name>
        <dbReference type="ChEBI" id="CHEBI:61481"/>
    </ligand>
</feature>
<protein>
    <recommendedName>
        <fullName evidence="1">dCTP deaminase</fullName>
        <ecNumber evidence="1">3.5.4.13</ecNumber>
    </recommendedName>
    <alternativeName>
        <fullName evidence="1">Deoxycytidine triphosphate deaminase</fullName>
    </alternativeName>
</protein>
<reference key="1">
    <citation type="journal article" date="2008" name="PLoS ONE">
        <title>Genome biology of Actinobacillus pleuropneumoniae JL03, an isolate of serotype 3 prevalent in China.</title>
        <authorList>
            <person name="Xu Z."/>
            <person name="Zhou Y."/>
            <person name="Li L."/>
            <person name="Zhou R."/>
            <person name="Xiao S."/>
            <person name="Wan Y."/>
            <person name="Zhang S."/>
            <person name="Wang K."/>
            <person name="Li W."/>
            <person name="Li L."/>
            <person name="Jin H."/>
            <person name="Kang M."/>
            <person name="Dalai B."/>
            <person name="Li T."/>
            <person name="Liu L."/>
            <person name="Cheng Y."/>
            <person name="Zhang L."/>
            <person name="Xu T."/>
            <person name="Zheng H."/>
            <person name="Pu S."/>
            <person name="Wang B."/>
            <person name="Gu W."/>
            <person name="Zhang X.L."/>
            <person name="Zhu G.-F."/>
            <person name="Wang S."/>
            <person name="Zhao G.-P."/>
            <person name="Chen H."/>
        </authorList>
    </citation>
    <scope>NUCLEOTIDE SEQUENCE [LARGE SCALE GENOMIC DNA]</scope>
    <source>
        <strain>JL03</strain>
    </source>
</reference>
<comment type="function">
    <text evidence="1">Catalyzes the deamination of dCTP to dUTP.</text>
</comment>
<comment type="catalytic activity">
    <reaction evidence="1">
        <text>dCTP + H2O + H(+) = dUTP + NH4(+)</text>
        <dbReference type="Rhea" id="RHEA:22680"/>
        <dbReference type="ChEBI" id="CHEBI:15377"/>
        <dbReference type="ChEBI" id="CHEBI:15378"/>
        <dbReference type="ChEBI" id="CHEBI:28938"/>
        <dbReference type="ChEBI" id="CHEBI:61481"/>
        <dbReference type="ChEBI" id="CHEBI:61555"/>
        <dbReference type="EC" id="3.5.4.13"/>
    </reaction>
</comment>
<comment type="pathway">
    <text evidence="1">Pyrimidine metabolism; dUMP biosynthesis; dUMP from dCTP (dUTP route): step 1/2.</text>
</comment>
<comment type="subunit">
    <text evidence="1">Homotrimer.</text>
</comment>
<comment type="similarity">
    <text evidence="1">Belongs to the dCTP deaminase family.</text>
</comment>
<keyword id="KW-0378">Hydrolase</keyword>
<keyword id="KW-0546">Nucleotide metabolism</keyword>
<keyword id="KW-0547">Nucleotide-binding</keyword>
<dbReference type="EC" id="3.5.4.13" evidence="1"/>
<dbReference type="EMBL" id="CP000687">
    <property type="protein sequence ID" value="ABY69401.1"/>
    <property type="molecule type" value="Genomic_DNA"/>
</dbReference>
<dbReference type="RefSeq" id="WP_005597311.1">
    <property type="nucleotide sequence ID" value="NC_010278.1"/>
</dbReference>
<dbReference type="SMR" id="B0BPB6"/>
<dbReference type="GeneID" id="48599022"/>
<dbReference type="KEGG" id="apj:APJL_0843"/>
<dbReference type="HOGENOM" id="CLU_087476_2_0_6"/>
<dbReference type="UniPathway" id="UPA00610">
    <property type="reaction ID" value="UER00665"/>
</dbReference>
<dbReference type="Proteomes" id="UP000008547">
    <property type="component" value="Chromosome"/>
</dbReference>
<dbReference type="GO" id="GO:0008829">
    <property type="term" value="F:dCTP deaminase activity"/>
    <property type="evidence" value="ECO:0007669"/>
    <property type="project" value="UniProtKB-UniRule"/>
</dbReference>
<dbReference type="GO" id="GO:0000166">
    <property type="term" value="F:nucleotide binding"/>
    <property type="evidence" value="ECO:0007669"/>
    <property type="project" value="UniProtKB-KW"/>
</dbReference>
<dbReference type="GO" id="GO:0006226">
    <property type="term" value="P:dUMP biosynthetic process"/>
    <property type="evidence" value="ECO:0007669"/>
    <property type="project" value="UniProtKB-UniPathway"/>
</dbReference>
<dbReference type="GO" id="GO:0006229">
    <property type="term" value="P:dUTP biosynthetic process"/>
    <property type="evidence" value="ECO:0007669"/>
    <property type="project" value="UniProtKB-UniRule"/>
</dbReference>
<dbReference type="GO" id="GO:0015949">
    <property type="term" value="P:nucleobase-containing small molecule interconversion"/>
    <property type="evidence" value="ECO:0007669"/>
    <property type="project" value="TreeGrafter"/>
</dbReference>
<dbReference type="CDD" id="cd07557">
    <property type="entry name" value="trimeric_dUTPase"/>
    <property type="match status" value="1"/>
</dbReference>
<dbReference type="FunFam" id="2.70.40.10:FF:000003">
    <property type="entry name" value="dCTP deaminase"/>
    <property type="match status" value="1"/>
</dbReference>
<dbReference type="Gene3D" id="2.70.40.10">
    <property type="match status" value="1"/>
</dbReference>
<dbReference type="HAMAP" id="MF_00146">
    <property type="entry name" value="dCTP_deaminase"/>
    <property type="match status" value="1"/>
</dbReference>
<dbReference type="InterPro" id="IPR011962">
    <property type="entry name" value="dCTP_deaminase"/>
</dbReference>
<dbReference type="InterPro" id="IPR036157">
    <property type="entry name" value="dUTPase-like_sf"/>
</dbReference>
<dbReference type="InterPro" id="IPR033704">
    <property type="entry name" value="dUTPase_trimeric"/>
</dbReference>
<dbReference type="NCBIfam" id="TIGR02274">
    <property type="entry name" value="dCTP_deam"/>
    <property type="match status" value="1"/>
</dbReference>
<dbReference type="PANTHER" id="PTHR42680">
    <property type="entry name" value="DCTP DEAMINASE"/>
    <property type="match status" value="1"/>
</dbReference>
<dbReference type="PANTHER" id="PTHR42680:SF3">
    <property type="entry name" value="DCTP DEAMINASE"/>
    <property type="match status" value="1"/>
</dbReference>
<dbReference type="Pfam" id="PF22769">
    <property type="entry name" value="DCD"/>
    <property type="match status" value="1"/>
</dbReference>
<dbReference type="SUPFAM" id="SSF51283">
    <property type="entry name" value="dUTPase-like"/>
    <property type="match status" value="1"/>
</dbReference>
<accession>B0BPB6</accession>